<keyword id="KW-1185">Reference proteome</keyword>
<keyword id="KW-0784">Thiamine biosynthesis</keyword>
<keyword id="KW-0808">Transferase</keyword>
<dbReference type="EC" id="2.5.1.3" evidence="1"/>
<dbReference type="EMBL" id="AE000666">
    <property type="protein sequence ID" value="AAB85359.1"/>
    <property type="molecule type" value="Genomic_DNA"/>
</dbReference>
<dbReference type="PIR" id="A69215">
    <property type="entry name" value="A69215"/>
</dbReference>
<dbReference type="SMR" id="O26949"/>
<dbReference type="STRING" id="187420.MTH_861"/>
<dbReference type="PaxDb" id="187420-MTH_861"/>
<dbReference type="EnsemblBacteria" id="AAB85359">
    <property type="protein sequence ID" value="AAB85359"/>
    <property type="gene ID" value="MTH_861"/>
</dbReference>
<dbReference type="KEGG" id="mth:MTH_861"/>
<dbReference type="HOGENOM" id="CLU_105304_0_0_2"/>
<dbReference type="InParanoid" id="O26949"/>
<dbReference type="UniPathway" id="UPA00060">
    <property type="reaction ID" value="UER00141"/>
</dbReference>
<dbReference type="Proteomes" id="UP000005223">
    <property type="component" value="Chromosome"/>
</dbReference>
<dbReference type="GO" id="GO:0004789">
    <property type="term" value="F:thiamine-phosphate diphosphorylase activity"/>
    <property type="evidence" value="ECO:0007669"/>
    <property type="project" value="UniProtKB-EC"/>
</dbReference>
<dbReference type="GO" id="GO:0009228">
    <property type="term" value="P:thiamine biosynthetic process"/>
    <property type="evidence" value="ECO:0007669"/>
    <property type="project" value="UniProtKB-KW"/>
</dbReference>
<dbReference type="GO" id="GO:0009229">
    <property type="term" value="P:thiamine diphosphate biosynthetic process"/>
    <property type="evidence" value="ECO:0007669"/>
    <property type="project" value="UniProtKB-UniPathway"/>
</dbReference>
<dbReference type="Gene3D" id="3.40.225.10">
    <property type="entry name" value="Class II aldolase/adducin N-terminal domain"/>
    <property type="match status" value="1"/>
</dbReference>
<dbReference type="InterPro" id="IPR036409">
    <property type="entry name" value="Aldolase_II/adducin_N_sf"/>
</dbReference>
<dbReference type="InterPro" id="IPR019293">
    <property type="entry name" value="ThiN"/>
</dbReference>
<dbReference type="PANTHER" id="PTHR40730:SF5">
    <property type="entry name" value="HTH CRO_C1-TYPE DOMAIN-CONTAINING PROTEIN"/>
    <property type="match status" value="1"/>
</dbReference>
<dbReference type="PANTHER" id="PTHR40730">
    <property type="entry name" value="TRANSCRIPTIONAL REGULATOR PROTEIN-LIKE PROTEIN"/>
    <property type="match status" value="1"/>
</dbReference>
<dbReference type="Pfam" id="PF10120">
    <property type="entry name" value="ThiN"/>
    <property type="match status" value="1"/>
</dbReference>
<dbReference type="SUPFAM" id="SSF53639">
    <property type="entry name" value="AraD/HMP-PK domain-like"/>
    <property type="match status" value="1"/>
</dbReference>
<organism>
    <name type="scientific">Methanothermobacter thermautotrophicus (strain ATCC 29096 / DSM 1053 / JCM 10044 / NBRC 100330 / Delta H)</name>
    <name type="common">Methanobacterium thermoautotrophicum</name>
    <dbReference type="NCBI Taxonomy" id="187420"/>
    <lineage>
        <taxon>Archaea</taxon>
        <taxon>Methanobacteriati</taxon>
        <taxon>Methanobacteriota</taxon>
        <taxon>Methanomada group</taxon>
        <taxon>Methanobacteria</taxon>
        <taxon>Methanobacteriales</taxon>
        <taxon>Methanobacteriaceae</taxon>
        <taxon>Methanothermobacter</taxon>
    </lineage>
</organism>
<comment type="function">
    <text evidence="1">Condenses 4-methyl-5-(beta-hydroxyethyl)thiazole monophosphate (THZ-P) and 4-amino-5-hydroxymethyl pyrimidine pyrophosphate (HMP-PP) to form thiamine monophosphate (TMP).</text>
</comment>
<comment type="catalytic activity">
    <reaction evidence="1">
        <text>2-[(2R,5Z)-2-carboxy-4-methylthiazol-5(2H)-ylidene]ethyl phosphate + 4-amino-2-methyl-5-(diphosphooxymethyl)pyrimidine + 2 H(+) = thiamine phosphate + CO2 + diphosphate</text>
        <dbReference type="Rhea" id="RHEA:47844"/>
        <dbReference type="ChEBI" id="CHEBI:15378"/>
        <dbReference type="ChEBI" id="CHEBI:16526"/>
        <dbReference type="ChEBI" id="CHEBI:33019"/>
        <dbReference type="ChEBI" id="CHEBI:37575"/>
        <dbReference type="ChEBI" id="CHEBI:57841"/>
        <dbReference type="ChEBI" id="CHEBI:62899"/>
        <dbReference type="EC" id="2.5.1.3"/>
    </reaction>
</comment>
<comment type="catalytic activity">
    <reaction evidence="1">
        <text>2-(2-carboxy-4-methylthiazol-5-yl)ethyl phosphate + 4-amino-2-methyl-5-(diphosphooxymethyl)pyrimidine + 2 H(+) = thiamine phosphate + CO2 + diphosphate</text>
        <dbReference type="Rhea" id="RHEA:47848"/>
        <dbReference type="ChEBI" id="CHEBI:15378"/>
        <dbReference type="ChEBI" id="CHEBI:16526"/>
        <dbReference type="ChEBI" id="CHEBI:33019"/>
        <dbReference type="ChEBI" id="CHEBI:37575"/>
        <dbReference type="ChEBI" id="CHEBI:57841"/>
        <dbReference type="ChEBI" id="CHEBI:62890"/>
        <dbReference type="EC" id="2.5.1.3"/>
    </reaction>
</comment>
<comment type="catalytic activity">
    <reaction evidence="1">
        <text>4-methyl-5-(2-phosphooxyethyl)-thiazole + 4-amino-2-methyl-5-(diphosphooxymethyl)pyrimidine + H(+) = thiamine phosphate + diphosphate</text>
        <dbReference type="Rhea" id="RHEA:22328"/>
        <dbReference type="ChEBI" id="CHEBI:15378"/>
        <dbReference type="ChEBI" id="CHEBI:33019"/>
        <dbReference type="ChEBI" id="CHEBI:37575"/>
        <dbReference type="ChEBI" id="CHEBI:57841"/>
        <dbReference type="ChEBI" id="CHEBI:58296"/>
        <dbReference type="EC" id="2.5.1.3"/>
    </reaction>
</comment>
<comment type="pathway">
    <text>Cofactor biosynthesis; thiamine diphosphate biosynthesis; thiamine phosphate from 4-amino-2-methyl-5-diphosphomethylpyrimidine and 4-methyl-5-(2-phosphoethyl)-thiazole: step 1/1.</text>
</comment>
<comment type="similarity">
    <text evidence="2">Belongs to the ThiN family.</text>
</comment>
<accession>O26949</accession>
<gene>
    <name type="primary">thiN</name>
    <name type="ordered locus">MTH_861</name>
</gene>
<reference key="1">
    <citation type="journal article" date="1997" name="J. Bacteriol.">
        <title>Complete genome sequence of Methanobacterium thermoautotrophicum deltaH: functional analysis and comparative genomics.</title>
        <authorList>
            <person name="Smith D.R."/>
            <person name="Doucette-Stamm L.A."/>
            <person name="Deloughery C."/>
            <person name="Lee H.-M."/>
            <person name="Dubois J."/>
            <person name="Aldredge T."/>
            <person name="Bashirzadeh R."/>
            <person name="Blakely D."/>
            <person name="Cook R."/>
            <person name="Gilbert K."/>
            <person name="Harrison D."/>
            <person name="Hoang L."/>
            <person name="Keagle P."/>
            <person name="Lumm W."/>
            <person name="Pothier B."/>
            <person name="Qiu D."/>
            <person name="Spadafora R."/>
            <person name="Vicare R."/>
            <person name="Wang Y."/>
            <person name="Wierzbowski J."/>
            <person name="Gibson R."/>
            <person name="Jiwani N."/>
            <person name="Caruso A."/>
            <person name="Bush D."/>
            <person name="Safer H."/>
            <person name="Patwell D."/>
            <person name="Prabhakar S."/>
            <person name="McDougall S."/>
            <person name="Shimer G."/>
            <person name="Goyal A."/>
            <person name="Pietrovski S."/>
            <person name="Church G.M."/>
            <person name="Daniels C.J."/>
            <person name="Mao J.-I."/>
            <person name="Rice P."/>
            <person name="Noelling J."/>
            <person name="Reeve J.N."/>
        </authorList>
    </citation>
    <scope>NUCLEOTIDE SEQUENCE [LARGE SCALE GENOMIC DNA]</scope>
    <source>
        <strain>ATCC 29096 / DSM 1053 / JCM 10044 / NBRC 100330 / Delta H</strain>
    </source>
</reference>
<reference key="2">
    <citation type="journal article" date="2003" name="Nat. Biotechnol.">
        <title>Systematic discovery of analogous enzymes in thiamin biosynthesis.</title>
        <authorList>
            <person name="Morett E."/>
            <person name="Korbel J.O."/>
            <person name="Rajan E."/>
            <person name="Saab-Rincon G."/>
            <person name="Olvera L."/>
            <person name="Olvera M."/>
            <person name="Schmidt S."/>
            <person name="Snel B."/>
            <person name="Bork P."/>
        </authorList>
    </citation>
    <scope>IDENTIFICATION</scope>
    <scope>GENE NAME</scope>
</reference>
<name>THIN_METTH</name>
<evidence type="ECO:0000250" key="1">
    <source>
        <dbReference type="UniProtKB" id="Q9WZP7"/>
    </source>
</evidence>
<evidence type="ECO:0000305" key="2"/>
<protein>
    <recommendedName>
        <fullName>Thiamine-phosphate synthase ThiN</fullName>
        <shortName>TP synthase</shortName>
        <shortName>TPS</shortName>
        <ecNumber evidence="1">2.5.1.3</ecNumber>
    </recommendedName>
    <alternativeName>
        <fullName>Thiamine-phosphate pyrophosphorylase</fullName>
        <shortName>TMP pyrophosphorylase</shortName>
        <shortName>TMP-PPase</shortName>
    </alternativeName>
</protein>
<feature type="chain" id="PRO_0000415382" description="Thiamine-phosphate synthase ThiN">
    <location>
        <begin position="1"/>
        <end position="190"/>
    </location>
</feature>
<sequence length="190" mass="21149">MMIMEIENVRRALEMISSAEDFGILIPEVRSNIVMARSNPCGPEDVVAVPGRITEFQGRAFACRDPEYGASSHMARFIIALNEHLPGRRSALNIKFDESIISICEDMGLVVSSYDRSREPDSVRDTEGGSIPWGVEEALRNSESPPDVIYHRGAWGKEPMIVLTGRDAVEVAELAIKILRKYKSLKGDTR</sequence>
<proteinExistence type="inferred from homology"/>